<comment type="catalytic activity">
    <reaction>
        <text>L-seryl-[protein] + ATP = O-phospho-L-seryl-[protein] + ADP + H(+)</text>
        <dbReference type="Rhea" id="RHEA:17989"/>
        <dbReference type="Rhea" id="RHEA-COMP:9863"/>
        <dbReference type="Rhea" id="RHEA-COMP:11604"/>
        <dbReference type="ChEBI" id="CHEBI:15378"/>
        <dbReference type="ChEBI" id="CHEBI:29999"/>
        <dbReference type="ChEBI" id="CHEBI:30616"/>
        <dbReference type="ChEBI" id="CHEBI:83421"/>
        <dbReference type="ChEBI" id="CHEBI:456216"/>
        <dbReference type="EC" id="2.7.11.1"/>
    </reaction>
</comment>
<comment type="catalytic activity">
    <reaction>
        <text>L-threonyl-[protein] + ATP = O-phospho-L-threonyl-[protein] + ADP + H(+)</text>
        <dbReference type="Rhea" id="RHEA:46608"/>
        <dbReference type="Rhea" id="RHEA-COMP:11060"/>
        <dbReference type="Rhea" id="RHEA-COMP:11605"/>
        <dbReference type="ChEBI" id="CHEBI:15378"/>
        <dbReference type="ChEBI" id="CHEBI:30013"/>
        <dbReference type="ChEBI" id="CHEBI:30616"/>
        <dbReference type="ChEBI" id="CHEBI:61977"/>
        <dbReference type="ChEBI" id="CHEBI:456216"/>
        <dbReference type="EC" id="2.7.11.1"/>
    </reaction>
</comment>
<comment type="similarity">
    <text evidence="4">Belongs to the protein kinase superfamily. TKL Ser/Thr protein kinase family.</text>
</comment>
<feature type="chain" id="PRO_0000355157" description="Probable serine/threonine-protein kinase DDB_G0282963">
    <location>
        <begin position="1"/>
        <end position="1761"/>
    </location>
</feature>
<feature type="domain" description="Protein kinase" evidence="1">
    <location>
        <begin position="1476"/>
        <end position="1744"/>
    </location>
</feature>
<feature type="region of interest" description="Disordered" evidence="3">
    <location>
        <begin position="18"/>
        <end position="47"/>
    </location>
</feature>
<feature type="region of interest" description="Disordered" evidence="3">
    <location>
        <begin position="60"/>
        <end position="269"/>
    </location>
</feature>
<feature type="region of interest" description="Disordered" evidence="3">
    <location>
        <begin position="322"/>
        <end position="458"/>
    </location>
</feature>
<feature type="region of interest" description="Disordered" evidence="3">
    <location>
        <begin position="545"/>
        <end position="717"/>
    </location>
</feature>
<feature type="region of interest" description="Disordered" evidence="3">
    <location>
        <begin position="749"/>
        <end position="783"/>
    </location>
</feature>
<feature type="region of interest" description="Disordered" evidence="3">
    <location>
        <begin position="798"/>
        <end position="830"/>
    </location>
</feature>
<feature type="region of interest" description="Disordered" evidence="3">
    <location>
        <begin position="842"/>
        <end position="956"/>
    </location>
</feature>
<feature type="region of interest" description="Disordered" evidence="3">
    <location>
        <begin position="972"/>
        <end position="997"/>
    </location>
</feature>
<feature type="region of interest" description="Disordered" evidence="3">
    <location>
        <begin position="1081"/>
        <end position="1151"/>
    </location>
</feature>
<feature type="region of interest" description="Disordered" evidence="3">
    <location>
        <begin position="1179"/>
        <end position="1305"/>
    </location>
</feature>
<feature type="region of interest" description="Disordered" evidence="3">
    <location>
        <begin position="1318"/>
        <end position="1343"/>
    </location>
</feature>
<feature type="region of interest" description="Disordered" evidence="3">
    <location>
        <begin position="1355"/>
        <end position="1459"/>
    </location>
</feature>
<feature type="compositionally biased region" description="Low complexity" evidence="3">
    <location>
        <begin position="19"/>
        <end position="47"/>
    </location>
</feature>
<feature type="compositionally biased region" description="Low complexity" evidence="3">
    <location>
        <begin position="60"/>
        <end position="85"/>
    </location>
</feature>
<feature type="compositionally biased region" description="Low complexity" evidence="3">
    <location>
        <begin position="92"/>
        <end position="105"/>
    </location>
</feature>
<feature type="compositionally biased region" description="Low complexity" evidence="3">
    <location>
        <begin position="112"/>
        <end position="237"/>
    </location>
</feature>
<feature type="compositionally biased region" description="Polar residues" evidence="3">
    <location>
        <begin position="238"/>
        <end position="256"/>
    </location>
</feature>
<feature type="compositionally biased region" description="Low complexity" evidence="3">
    <location>
        <begin position="257"/>
        <end position="269"/>
    </location>
</feature>
<feature type="compositionally biased region" description="Low complexity" evidence="3">
    <location>
        <begin position="322"/>
        <end position="341"/>
    </location>
</feature>
<feature type="compositionally biased region" description="Low complexity" evidence="3">
    <location>
        <begin position="348"/>
        <end position="451"/>
    </location>
</feature>
<feature type="compositionally biased region" description="Low complexity" evidence="3">
    <location>
        <begin position="546"/>
        <end position="572"/>
    </location>
</feature>
<feature type="compositionally biased region" description="Polar residues" evidence="3">
    <location>
        <begin position="573"/>
        <end position="582"/>
    </location>
</feature>
<feature type="compositionally biased region" description="Low complexity" evidence="3">
    <location>
        <begin position="591"/>
        <end position="627"/>
    </location>
</feature>
<feature type="compositionally biased region" description="Acidic residues" evidence="3">
    <location>
        <begin position="633"/>
        <end position="643"/>
    </location>
</feature>
<feature type="compositionally biased region" description="Low complexity" evidence="3">
    <location>
        <begin position="674"/>
        <end position="697"/>
    </location>
</feature>
<feature type="compositionally biased region" description="Low complexity" evidence="3">
    <location>
        <begin position="759"/>
        <end position="778"/>
    </location>
</feature>
<feature type="compositionally biased region" description="Low complexity" evidence="3">
    <location>
        <begin position="805"/>
        <end position="824"/>
    </location>
</feature>
<feature type="compositionally biased region" description="Low complexity" evidence="3">
    <location>
        <begin position="847"/>
        <end position="885"/>
    </location>
</feature>
<feature type="compositionally biased region" description="Low complexity" evidence="3">
    <location>
        <begin position="902"/>
        <end position="956"/>
    </location>
</feature>
<feature type="compositionally biased region" description="Low complexity" evidence="3">
    <location>
        <begin position="979"/>
        <end position="990"/>
    </location>
</feature>
<feature type="compositionally biased region" description="Low complexity" evidence="3">
    <location>
        <begin position="1081"/>
        <end position="1149"/>
    </location>
</feature>
<feature type="compositionally biased region" description="Low complexity" evidence="3">
    <location>
        <begin position="1180"/>
        <end position="1262"/>
    </location>
</feature>
<feature type="compositionally biased region" description="Basic residues" evidence="3">
    <location>
        <begin position="1263"/>
        <end position="1273"/>
    </location>
</feature>
<feature type="compositionally biased region" description="Low complexity" evidence="3">
    <location>
        <begin position="1288"/>
        <end position="1303"/>
    </location>
</feature>
<feature type="compositionally biased region" description="Low complexity" evidence="3">
    <location>
        <begin position="1320"/>
        <end position="1338"/>
    </location>
</feature>
<feature type="compositionally biased region" description="Low complexity" evidence="3">
    <location>
        <begin position="1359"/>
        <end position="1386"/>
    </location>
</feature>
<feature type="compositionally biased region" description="Low complexity" evidence="3">
    <location>
        <begin position="1393"/>
        <end position="1454"/>
    </location>
</feature>
<feature type="active site" description="Proton acceptor" evidence="1 2">
    <location>
        <position position="1597"/>
    </location>
</feature>
<feature type="binding site" evidence="1">
    <location>
        <begin position="1482"/>
        <end position="1490"/>
    </location>
    <ligand>
        <name>ATP</name>
        <dbReference type="ChEBI" id="CHEBI:30616"/>
    </ligand>
</feature>
<feature type="binding site" evidence="1">
    <location>
        <position position="1503"/>
    </location>
    <ligand>
        <name>ATP</name>
        <dbReference type="ChEBI" id="CHEBI:30616"/>
    </ligand>
</feature>
<proteinExistence type="inferred from homology"/>
<name>Y9844_DICDI</name>
<reference key="1">
    <citation type="journal article" date="2005" name="Nature">
        <title>The genome of the social amoeba Dictyostelium discoideum.</title>
        <authorList>
            <person name="Eichinger L."/>
            <person name="Pachebat J.A."/>
            <person name="Gloeckner G."/>
            <person name="Rajandream M.A."/>
            <person name="Sucgang R."/>
            <person name="Berriman M."/>
            <person name="Song J."/>
            <person name="Olsen R."/>
            <person name="Szafranski K."/>
            <person name="Xu Q."/>
            <person name="Tunggal B."/>
            <person name="Kummerfeld S."/>
            <person name="Madera M."/>
            <person name="Konfortov B.A."/>
            <person name="Rivero F."/>
            <person name="Bankier A.T."/>
            <person name="Lehmann R."/>
            <person name="Hamlin N."/>
            <person name="Davies R."/>
            <person name="Gaudet P."/>
            <person name="Fey P."/>
            <person name="Pilcher K."/>
            <person name="Chen G."/>
            <person name="Saunders D."/>
            <person name="Sodergren E.J."/>
            <person name="Davis P."/>
            <person name="Kerhornou A."/>
            <person name="Nie X."/>
            <person name="Hall N."/>
            <person name="Anjard C."/>
            <person name="Hemphill L."/>
            <person name="Bason N."/>
            <person name="Farbrother P."/>
            <person name="Desany B."/>
            <person name="Just E."/>
            <person name="Morio T."/>
            <person name="Rost R."/>
            <person name="Churcher C.M."/>
            <person name="Cooper J."/>
            <person name="Haydock S."/>
            <person name="van Driessche N."/>
            <person name="Cronin A."/>
            <person name="Goodhead I."/>
            <person name="Muzny D.M."/>
            <person name="Mourier T."/>
            <person name="Pain A."/>
            <person name="Lu M."/>
            <person name="Harper D."/>
            <person name="Lindsay R."/>
            <person name="Hauser H."/>
            <person name="James K.D."/>
            <person name="Quiles M."/>
            <person name="Madan Babu M."/>
            <person name="Saito T."/>
            <person name="Buchrieser C."/>
            <person name="Wardroper A."/>
            <person name="Felder M."/>
            <person name="Thangavelu M."/>
            <person name="Johnson D."/>
            <person name="Knights A."/>
            <person name="Loulseged H."/>
            <person name="Mungall K.L."/>
            <person name="Oliver K."/>
            <person name="Price C."/>
            <person name="Quail M.A."/>
            <person name="Urushihara H."/>
            <person name="Hernandez J."/>
            <person name="Rabbinowitsch E."/>
            <person name="Steffen D."/>
            <person name="Sanders M."/>
            <person name="Ma J."/>
            <person name="Kohara Y."/>
            <person name="Sharp S."/>
            <person name="Simmonds M.N."/>
            <person name="Spiegler S."/>
            <person name="Tivey A."/>
            <person name="Sugano S."/>
            <person name="White B."/>
            <person name="Walker D."/>
            <person name="Woodward J.R."/>
            <person name="Winckler T."/>
            <person name="Tanaka Y."/>
            <person name="Shaulsky G."/>
            <person name="Schleicher M."/>
            <person name="Weinstock G.M."/>
            <person name="Rosenthal A."/>
            <person name="Cox E.C."/>
            <person name="Chisholm R.L."/>
            <person name="Gibbs R.A."/>
            <person name="Loomis W.F."/>
            <person name="Platzer M."/>
            <person name="Kay R.R."/>
            <person name="Williams J.G."/>
            <person name="Dear P.H."/>
            <person name="Noegel A.A."/>
            <person name="Barrell B.G."/>
            <person name="Kuspa A."/>
        </authorList>
    </citation>
    <scope>NUCLEOTIDE SEQUENCE [LARGE SCALE GENOMIC DNA]</scope>
    <source>
        <strain>AX4</strain>
    </source>
</reference>
<keyword id="KW-0067">ATP-binding</keyword>
<keyword id="KW-0418">Kinase</keyword>
<keyword id="KW-0547">Nucleotide-binding</keyword>
<keyword id="KW-1185">Reference proteome</keyword>
<keyword id="KW-0723">Serine/threonine-protein kinase</keyword>
<keyword id="KW-0808">Transferase</keyword>
<evidence type="ECO:0000255" key="1">
    <source>
        <dbReference type="PROSITE-ProRule" id="PRU00159"/>
    </source>
</evidence>
<evidence type="ECO:0000255" key="2">
    <source>
        <dbReference type="PROSITE-ProRule" id="PRU10027"/>
    </source>
</evidence>
<evidence type="ECO:0000256" key="3">
    <source>
        <dbReference type="SAM" id="MobiDB-lite"/>
    </source>
</evidence>
<evidence type="ECO:0000305" key="4"/>
<sequence length="1761" mass="195076">MKDNIPTGSIIIPLNHHPQQQQIPQQQEQQQQQQQQQQQQQQQQQQQQQQQQQQQQQQQQQQQEQQNNNNNINDNINGNNNSNEIKNTKDANITNNNGTSIIISLSPPPSPALNSSSSSTINSNNTTISGGDNENNNNNTNNTNNNINNSNNSNNNNSNNNSNNNNNNNNNNNNNNNNNNNNNNNNNNNNNNNNNNTNEEGNKTNINTTNNNSQNININNGINKNTRNNNNNNNNNNKQMTPPTFKNNLQVKHQPQSSSGGSIGGSNKLSLSKRVKSTTSSRASIIDSIDIDIVFNSLKNSITSKNSFVLGVHRHRMSSISSISNTTNETTTTTTTTTNTTIEDHQIGSIGNNNNNNNNNNNNNNNYFNVNNGNSNNINNYNNSGNGNNNNNNNNNNNNNNNNNNNNNNNNNNNNNNNNHFNSYSNNNNNSNSNNNSNNNLHGLNNNNNGVMESSDFNSDTVGRGSIFTVSNSDVNSDSNVGLNQPSFNDLTITCDTLTETDEEDLMEKFLEDSDPDIDEEDDDDDFNEEEFMKFQTQFLHNKSQNSSLNINNNNNSSNNNNINNNNNNNNIMAGSTSSVIYKNSGKPPLNENNNNNINNDNTVCNINNNNNSNNNKSNNSNNSNNSFKDDISSDEEPETDSDTEFKNNHHTNYHNSPKNQKHVDRKPFVNSKNNTNTNTNTHNTYNNNKNNNNNNTFEQQSNEDEESYSGSYKSSQNSVIYKPNLVSSPNFKSSLSSSSLISVGTNSLKNSPFPPSSPILSPQTDDPNNNNNNNNSNTTISQPLPIALNVSIESPRAFYNSGSNNNNNNNNNNNNNNNNNNNNTNSTSATTPIIQAQTHPTTQIPTSDIDTSNSDNNNNNNNNNTSDNNFNDYNNDYNNDYNNYETEFLPPKKTPPPPIPTKMSSTPPSSTSSFLSTSSVTSVNSNNSVTSSTSTNTSNSSSPKHSSSQKSKSVFSKIIKEGKKRLATKFNSHHHHNSGNNSSNSNNNNNDDEVPTYIHIYRGNGDESWRVKVTSSTTVRDLLSMSLTSTVKGEPPSLKLYLTSSLNSCTCVSSPNNLSSAPAVSSSSSSSTTLETTTIITSASPSSSSSSFTSPTTTNSLNSHLNHSNNINNNNNNNTNNNNNNNNNNNNNNNNNNTDRTNSNCTCNVNKPEKELNEDDKVLSVQKKWSGPSIFVLKNNCTKSSSSSTSSSSSSNNTNNNNNNNNTINNNSNNTGTRYSVSSITSESSEQSSNSHNSLNNNNHNNNNNNHSHNHNNSNNNNHHHHHHHHHNNNNNQNGQQEGVADSSSSSPWSSPALSSPSKQHSLQYFENIPTLALDSTNNNNNNNNDTDSTSSNMGTPTTSRRITTIFQKQHSRNNSSNNQNNNNINNNNNNNNNNNNNNNNEHLTPLSNSTSLSSASSISFLNSSNGNNSPNSNNSNSNNNNNNNNNNNNNNNNKKTTTTTTTTTMNSNGECWKNAERPRTGVRWISSTDLFLIKKIGAGSFSKVYKAKYMGEIVAIKVLKGEATSEQIELFKKEYDILSLVSSQNLIKFYGACKEKKLRMVTEYCQHGSLYHIMSKRKMDISWPLVFKWMHQAVDGINSLHTMRPALVHRDIKSQNLLINSQFDLKVADFGLAKPTELQTGSNSTIKGTMAYCAPELYNGISYSEKADVYSLGIVLWEITTRVITGKYQRPYEDNTEISFDFQIVIMSSKQGIRPTMPPNVPPKLSYLIQKCWNQDPNERPSCQQILLAITSLYDDYIYNPSRYNDLILNNDLNN</sequence>
<organism>
    <name type="scientific">Dictyostelium discoideum</name>
    <name type="common">Social amoeba</name>
    <dbReference type="NCBI Taxonomy" id="44689"/>
    <lineage>
        <taxon>Eukaryota</taxon>
        <taxon>Amoebozoa</taxon>
        <taxon>Evosea</taxon>
        <taxon>Eumycetozoa</taxon>
        <taxon>Dictyostelia</taxon>
        <taxon>Dictyosteliales</taxon>
        <taxon>Dictyosteliaceae</taxon>
        <taxon>Dictyostelium</taxon>
    </lineage>
</organism>
<accession>Q54RR9</accession>
<gene>
    <name type="ORF">DDB_G0282963</name>
</gene>
<dbReference type="EC" id="2.7.11.1"/>
<dbReference type="EMBL" id="AAFI02000049">
    <property type="protein sequence ID" value="EAL65925.1"/>
    <property type="molecule type" value="Genomic_DNA"/>
</dbReference>
<dbReference type="RefSeq" id="XP_639282.1">
    <property type="nucleotide sequence ID" value="XM_634190.1"/>
</dbReference>
<dbReference type="SMR" id="Q54RR9"/>
<dbReference type="FunCoup" id="Q54RR9">
    <property type="interactions" value="463"/>
</dbReference>
<dbReference type="PaxDb" id="44689-DDB0229844"/>
<dbReference type="EnsemblProtists" id="EAL65925">
    <property type="protein sequence ID" value="EAL65925"/>
    <property type="gene ID" value="DDB_G0282963"/>
</dbReference>
<dbReference type="GeneID" id="8623851"/>
<dbReference type="KEGG" id="ddi:DDB_G0282963"/>
<dbReference type="dictyBase" id="DDB_G0282963"/>
<dbReference type="VEuPathDB" id="AmoebaDB:DDB_G0282963"/>
<dbReference type="eggNOG" id="KOG0192">
    <property type="taxonomic scope" value="Eukaryota"/>
</dbReference>
<dbReference type="HOGENOM" id="CLU_239097_0_0_1"/>
<dbReference type="InParanoid" id="Q54RR9"/>
<dbReference type="OMA" id="QGIRPTM"/>
<dbReference type="Reactome" id="R-DDI-5673000">
    <property type="pathway name" value="RAF activation"/>
</dbReference>
<dbReference type="Reactome" id="R-DDI-5675221">
    <property type="pathway name" value="Negative regulation of MAPK pathway"/>
</dbReference>
<dbReference type="PRO" id="PR:Q54RR9"/>
<dbReference type="Proteomes" id="UP000002195">
    <property type="component" value="Chromosome 4"/>
</dbReference>
<dbReference type="GO" id="GO:0005737">
    <property type="term" value="C:cytoplasm"/>
    <property type="evidence" value="ECO:0000318"/>
    <property type="project" value="GO_Central"/>
</dbReference>
<dbReference type="GO" id="GO:0005524">
    <property type="term" value="F:ATP binding"/>
    <property type="evidence" value="ECO:0007669"/>
    <property type="project" value="UniProtKB-KW"/>
</dbReference>
<dbReference type="GO" id="GO:0019899">
    <property type="term" value="F:enzyme binding"/>
    <property type="evidence" value="ECO:0007669"/>
    <property type="project" value="UniProtKB-ARBA"/>
</dbReference>
<dbReference type="GO" id="GO:0004672">
    <property type="term" value="F:protein kinase activity"/>
    <property type="evidence" value="ECO:0000318"/>
    <property type="project" value="GO_Central"/>
</dbReference>
<dbReference type="GO" id="GO:0106310">
    <property type="term" value="F:protein serine kinase activity"/>
    <property type="evidence" value="ECO:0007669"/>
    <property type="project" value="RHEA"/>
</dbReference>
<dbReference type="GO" id="GO:0004674">
    <property type="term" value="F:protein serine/threonine kinase activity"/>
    <property type="evidence" value="ECO:0007669"/>
    <property type="project" value="UniProtKB-KW"/>
</dbReference>
<dbReference type="GO" id="GO:0009967">
    <property type="term" value="P:positive regulation of signal transduction"/>
    <property type="evidence" value="ECO:0007669"/>
    <property type="project" value="UniProtKB-ARBA"/>
</dbReference>
<dbReference type="GO" id="GO:0007165">
    <property type="term" value="P:signal transduction"/>
    <property type="evidence" value="ECO:0000318"/>
    <property type="project" value="GO_Central"/>
</dbReference>
<dbReference type="CDD" id="cd13999">
    <property type="entry name" value="STKc_MAP3K-like"/>
    <property type="match status" value="1"/>
</dbReference>
<dbReference type="Gene3D" id="3.30.200.20">
    <property type="entry name" value="Phosphorylase Kinase, domain 1"/>
    <property type="match status" value="1"/>
</dbReference>
<dbReference type="Gene3D" id="1.10.510.10">
    <property type="entry name" value="Transferase(Phosphotransferase) domain 1"/>
    <property type="match status" value="1"/>
</dbReference>
<dbReference type="InterPro" id="IPR011009">
    <property type="entry name" value="Kinase-like_dom_sf"/>
</dbReference>
<dbReference type="InterPro" id="IPR000719">
    <property type="entry name" value="Prot_kinase_dom"/>
</dbReference>
<dbReference type="InterPro" id="IPR017441">
    <property type="entry name" value="Protein_kinase_ATP_BS"/>
</dbReference>
<dbReference type="InterPro" id="IPR001245">
    <property type="entry name" value="Ser-Thr/Tyr_kinase_cat_dom"/>
</dbReference>
<dbReference type="InterPro" id="IPR008271">
    <property type="entry name" value="Ser/Thr_kinase_AS"/>
</dbReference>
<dbReference type="PANTHER" id="PTHR46716">
    <property type="entry name" value="MITOGEN-ACTIVATED PROTEIN KINASE KINASE KINASE 7"/>
    <property type="match status" value="1"/>
</dbReference>
<dbReference type="PANTHER" id="PTHR46716:SF1">
    <property type="entry name" value="MITOGEN-ACTIVATED PROTEIN KINASE KINASE KINASE 7"/>
    <property type="match status" value="1"/>
</dbReference>
<dbReference type="Pfam" id="PF07714">
    <property type="entry name" value="PK_Tyr_Ser-Thr"/>
    <property type="match status" value="1"/>
</dbReference>
<dbReference type="SMART" id="SM00220">
    <property type="entry name" value="S_TKc"/>
    <property type="match status" value="1"/>
</dbReference>
<dbReference type="SUPFAM" id="SSF56112">
    <property type="entry name" value="Protein kinase-like (PK-like)"/>
    <property type="match status" value="1"/>
</dbReference>
<dbReference type="PROSITE" id="PS00107">
    <property type="entry name" value="PROTEIN_KINASE_ATP"/>
    <property type="match status" value="1"/>
</dbReference>
<dbReference type="PROSITE" id="PS50011">
    <property type="entry name" value="PROTEIN_KINASE_DOM"/>
    <property type="match status" value="1"/>
</dbReference>
<dbReference type="PROSITE" id="PS00108">
    <property type="entry name" value="PROTEIN_KINASE_ST"/>
    <property type="match status" value="1"/>
</dbReference>
<protein>
    <recommendedName>
        <fullName>Probable serine/threonine-protein kinase DDB_G0282963</fullName>
        <ecNumber>2.7.11.1</ecNumber>
    </recommendedName>
</protein>